<sequence>MSDSSHNLLYNKFELPESVKMSPVEGAVGGIDKVARFVADPLEKGMGHTLGSALRRALLIGLEAPAIVSFSMTGVLHEYMAVEGIIEDVTNIVLNLKGSLLKKYPLQDCEGGRCSQKLRATISVDASDLAAAGGQKEVTLGDLLQEGTFEAVNPEHVIFTVTRPMQLEVMLRVAFGRGYSPSERIVLEERGMNEIVLDAAFSPVVLVNYFVEDTRVGQDTDFDRLVLQVETDGRVAPKEAVAFATQILSKHFSVFEKMDEKRIVFEEAISVEKENKDDILHKLVLGINEIELSVRSTNCLSNANIETIGELVIMPEPRLLQFRNFGKKSLCEIKNKLKEMKLELGMDLSQFGVGLDNVKEKMKWYAEKIRSSKNTKG</sequence>
<dbReference type="EC" id="2.7.7.6" evidence="1"/>
<dbReference type="EMBL" id="L33834">
    <property type="protein sequence ID" value="AAA74989.1"/>
    <property type="molecule type" value="Genomic_DNA"/>
</dbReference>
<dbReference type="EMBL" id="AM884176">
    <property type="protein sequence ID" value="CAP04207.1"/>
    <property type="molecule type" value="Genomic_DNA"/>
</dbReference>
<dbReference type="PIR" id="A71505">
    <property type="entry name" value="A71505"/>
</dbReference>
<dbReference type="RefSeq" id="WP_009873864.1">
    <property type="nucleotide sequence ID" value="NC_010287.1"/>
</dbReference>
<dbReference type="RefSeq" id="YP_001654840.1">
    <property type="nucleotide sequence ID" value="NC_010287.1"/>
</dbReference>
<dbReference type="SMR" id="B0B881"/>
<dbReference type="KEGG" id="ctb:CTL0769"/>
<dbReference type="PATRIC" id="fig|471472.4.peg.825"/>
<dbReference type="HOGENOM" id="CLU_053084_0_1_0"/>
<dbReference type="Proteomes" id="UP001154402">
    <property type="component" value="Chromosome"/>
</dbReference>
<dbReference type="GO" id="GO:0005737">
    <property type="term" value="C:cytoplasm"/>
    <property type="evidence" value="ECO:0007669"/>
    <property type="project" value="UniProtKB-ARBA"/>
</dbReference>
<dbReference type="GO" id="GO:0000428">
    <property type="term" value="C:DNA-directed RNA polymerase complex"/>
    <property type="evidence" value="ECO:0007669"/>
    <property type="project" value="UniProtKB-KW"/>
</dbReference>
<dbReference type="GO" id="GO:0003677">
    <property type="term" value="F:DNA binding"/>
    <property type="evidence" value="ECO:0007669"/>
    <property type="project" value="UniProtKB-UniRule"/>
</dbReference>
<dbReference type="GO" id="GO:0003899">
    <property type="term" value="F:DNA-directed RNA polymerase activity"/>
    <property type="evidence" value="ECO:0007669"/>
    <property type="project" value="UniProtKB-UniRule"/>
</dbReference>
<dbReference type="GO" id="GO:0046983">
    <property type="term" value="F:protein dimerization activity"/>
    <property type="evidence" value="ECO:0007669"/>
    <property type="project" value="InterPro"/>
</dbReference>
<dbReference type="GO" id="GO:0006351">
    <property type="term" value="P:DNA-templated transcription"/>
    <property type="evidence" value="ECO:0007669"/>
    <property type="project" value="UniProtKB-UniRule"/>
</dbReference>
<dbReference type="CDD" id="cd06928">
    <property type="entry name" value="RNAP_alpha_NTD"/>
    <property type="match status" value="1"/>
</dbReference>
<dbReference type="FunFam" id="1.10.150.20:FF:000078">
    <property type="entry name" value="DNA-directed RNA polymerase subunit alpha"/>
    <property type="match status" value="1"/>
</dbReference>
<dbReference type="FunFam" id="2.170.120.12:FF:000014">
    <property type="entry name" value="DNA-directed RNA polymerase subunit alpha"/>
    <property type="match status" value="1"/>
</dbReference>
<dbReference type="Gene3D" id="1.10.150.20">
    <property type="entry name" value="5' to 3' exonuclease, C-terminal subdomain"/>
    <property type="match status" value="1"/>
</dbReference>
<dbReference type="Gene3D" id="2.170.120.12">
    <property type="entry name" value="DNA-directed RNA polymerase, insert domain"/>
    <property type="match status" value="1"/>
</dbReference>
<dbReference type="Gene3D" id="3.30.1360.10">
    <property type="entry name" value="RNA polymerase, RBP11-like subunit"/>
    <property type="match status" value="1"/>
</dbReference>
<dbReference type="HAMAP" id="MF_00059">
    <property type="entry name" value="RNApol_bact_RpoA"/>
    <property type="match status" value="1"/>
</dbReference>
<dbReference type="InterPro" id="IPR011262">
    <property type="entry name" value="DNA-dir_RNA_pol_insert"/>
</dbReference>
<dbReference type="InterPro" id="IPR011263">
    <property type="entry name" value="DNA-dir_RNA_pol_RpoA/D/Rpb3"/>
</dbReference>
<dbReference type="InterPro" id="IPR011773">
    <property type="entry name" value="DNA-dir_RpoA"/>
</dbReference>
<dbReference type="InterPro" id="IPR036603">
    <property type="entry name" value="RBP11-like"/>
</dbReference>
<dbReference type="InterPro" id="IPR011260">
    <property type="entry name" value="RNAP_asu_C"/>
</dbReference>
<dbReference type="InterPro" id="IPR036643">
    <property type="entry name" value="RNApol_insert_sf"/>
</dbReference>
<dbReference type="NCBIfam" id="NF003513">
    <property type="entry name" value="PRK05182.1-2"/>
    <property type="match status" value="1"/>
</dbReference>
<dbReference type="NCBIfam" id="NF003517">
    <property type="entry name" value="PRK05182.2-3"/>
    <property type="match status" value="1"/>
</dbReference>
<dbReference type="NCBIfam" id="NF003519">
    <property type="entry name" value="PRK05182.2-5"/>
    <property type="match status" value="1"/>
</dbReference>
<dbReference type="NCBIfam" id="TIGR02027">
    <property type="entry name" value="rpoA"/>
    <property type="match status" value="1"/>
</dbReference>
<dbReference type="Pfam" id="PF01000">
    <property type="entry name" value="RNA_pol_A_bac"/>
    <property type="match status" value="1"/>
</dbReference>
<dbReference type="Pfam" id="PF03118">
    <property type="entry name" value="RNA_pol_A_CTD"/>
    <property type="match status" value="1"/>
</dbReference>
<dbReference type="Pfam" id="PF01193">
    <property type="entry name" value="RNA_pol_L"/>
    <property type="match status" value="1"/>
</dbReference>
<dbReference type="SMART" id="SM00662">
    <property type="entry name" value="RPOLD"/>
    <property type="match status" value="1"/>
</dbReference>
<dbReference type="SUPFAM" id="SSF47789">
    <property type="entry name" value="C-terminal domain of RNA polymerase alpha subunit"/>
    <property type="match status" value="1"/>
</dbReference>
<dbReference type="SUPFAM" id="SSF56553">
    <property type="entry name" value="Insert subdomain of RNA polymerase alpha subunit"/>
    <property type="match status" value="1"/>
</dbReference>
<dbReference type="SUPFAM" id="SSF55257">
    <property type="entry name" value="RBP11-like subunits of RNA polymerase"/>
    <property type="match status" value="1"/>
</dbReference>
<keyword id="KW-0240">DNA-directed RNA polymerase</keyword>
<keyword id="KW-0548">Nucleotidyltransferase</keyword>
<keyword id="KW-0804">Transcription</keyword>
<keyword id="KW-0808">Transferase</keyword>
<protein>
    <recommendedName>
        <fullName evidence="1">DNA-directed RNA polymerase subunit alpha</fullName>
        <shortName evidence="1">RNAP subunit alpha</shortName>
        <ecNumber evidence="1">2.7.7.6</ecNumber>
    </recommendedName>
    <alternativeName>
        <fullName evidence="1">RNA polymerase subunit alpha</fullName>
    </alternativeName>
    <alternativeName>
        <fullName evidence="1">Transcriptase subunit alpha</fullName>
    </alternativeName>
</protein>
<proteinExistence type="inferred from homology"/>
<evidence type="ECO:0000255" key="1">
    <source>
        <dbReference type="HAMAP-Rule" id="MF_00059"/>
    </source>
</evidence>
<evidence type="ECO:0000305" key="2"/>
<gene>
    <name evidence="1" type="primary">rpoA</name>
    <name type="ordered locus">CTL0769</name>
</gene>
<organism>
    <name type="scientific">Chlamydia trachomatis serovar L2 (strain ATCC VR-902B / DSM 19102 / 434/Bu)</name>
    <dbReference type="NCBI Taxonomy" id="471472"/>
    <lineage>
        <taxon>Bacteria</taxon>
        <taxon>Pseudomonadati</taxon>
        <taxon>Chlamydiota</taxon>
        <taxon>Chlamydiia</taxon>
        <taxon>Chlamydiales</taxon>
        <taxon>Chlamydiaceae</taxon>
        <taxon>Chlamydia/Chlamydophila group</taxon>
        <taxon>Chlamydia</taxon>
    </lineage>
</organism>
<name>RPOA_CHLT2</name>
<reference key="1">
    <citation type="journal article" date="1995" name="J. Bacteriol.">
        <title>Chlamydia trachomatis RNA polymerase alpha subunit: sequence and structural analysis.</title>
        <authorList>
            <person name="Gu L.J."/>
            <person name="Wenman W.M."/>
            <person name="Remacha M."/>
            <person name="Meuser R.U."/>
            <person name="Coffin J.M."/>
            <person name="Kaul R."/>
        </authorList>
    </citation>
    <scope>NUCLEOTIDE SEQUENCE [GENOMIC DNA]</scope>
</reference>
<reference key="2">
    <citation type="journal article" date="2008" name="Genome Res.">
        <title>Chlamydia trachomatis: genome sequence analysis of lymphogranuloma venereum isolates.</title>
        <authorList>
            <person name="Thomson N.R."/>
            <person name="Holden M.T.G."/>
            <person name="Carder C."/>
            <person name="Lennard N."/>
            <person name="Lockey S.J."/>
            <person name="Marsh P."/>
            <person name="Skipp P."/>
            <person name="O'Connor C.D."/>
            <person name="Goodhead I."/>
            <person name="Norbertzcak H."/>
            <person name="Harris B."/>
            <person name="Ormond D."/>
            <person name="Rance R."/>
            <person name="Quail M.A."/>
            <person name="Parkhill J."/>
            <person name="Stephens R.S."/>
            <person name="Clarke I.N."/>
        </authorList>
    </citation>
    <scope>NUCLEOTIDE SEQUENCE [LARGE SCALE GENOMIC DNA]</scope>
    <source>
        <strain>ATCC VR-902B / DSM 19102 / 434/Bu</strain>
    </source>
</reference>
<accession>B0B881</accession>
<accession>O84515</accession>
<accession>Q46449</accession>
<feature type="chain" id="PRO_1000091935" description="DNA-directed RNA polymerase subunit alpha">
    <location>
        <begin position="1"/>
        <end position="377"/>
    </location>
</feature>
<feature type="region of interest" description="Alpha N-terminal domain (alpha-NTD)" evidence="1">
    <location>
        <begin position="1"/>
        <end position="259"/>
    </location>
</feature>
<feature type="region of interest" description="Alpha C-terminal domain (alpha-CTD)" evidence="1">
    <location>
        <begin position="279"/>
        <end position="377"/>
    </location>
</feature>
<feature type="sequence conflict" description="In Ref. 1; AAA74989." evidence="2" ref="1">
    <original>G</original>
    <variation>S</variation>
    <location>
        <position position="30"/>
    </location>
</feature>
<feature type="sequence conflict" description="In Ref. 1; AAA74989." evidence="2" ref="1">
    <original>IV</original>
    <variation>ML</variation>
    <location>
        <begin position="92"/>
        <end position="93"/>
    </location>
</feature>
<feature type="sequence conflict" description="In Ref. 1; AAA74989." evidence="2" ref="1">
    <original>R</original>
    <variation>RLIR</variation>
    <location>
        <position position="295"/>
    </location>
</feature>
<feature type="sequence conflict" description="In Ref. 1; AAA74989." evidence="2" ref="1">
    <original>G</original>
    <variation>A</variation>
    <location>
        <position position="377"/>
    </location>
</feature>
<comment type="function">
    <text evidence="1">DNA-dependent RNA polymerase catalyzes the transcription of DNA into RNA using the four ribonucleoside triphosphates as substrates.</text>
</comment>
<comment type="catalytic activity">
    <reaction evidence="1">
        <text>RNA(n) + a ribonucleoside 5'-triphosphate = RNA(n+1) + diphosphate</text>
        <dbReference type="Rhea" id="RHEA:21248"/>
        <dbReference type="Rhea" id="RHEA-COMP:14527"/>
        <dbReference type="Rhea" id="RHEA-COMP:17342"/>
        <dbReference type="ChEBI" id="CHEBI:33019"/>
        <dbReference type="ChEBI" id="CHEBI:61557"/>
        <dbReference type="ChEBI" id="CHEBI:140395"/>
        <dbReference type="EC" id="2.7.7.6"/>
    </reaction>
</comment>
<comment type="subunit">
    <text evidence="1">Homodimer. The RNAP catalytic core consists of 2 alpha, 1 beta, 1 beta' and 1 omega subunit. When a sigma factor is associated with the core the holoenzyme is formed, which can initiate transcription.</text>
</comment>
<comment type="domain">
    <text evidence="1">The N-terminal domain is essential for RNAP assembly and basal transcription, whereas the C-terminal domain is involved in interaction with transcriptional regulators and with upstream promoter elements.</text>
</comment>
<comment type="similarity">
    <text evidence="1">Belongs to the RNA polymerase alpha chain family.</text>
</comment>